<name>HSP1_SMIBI</name>
<accession>Q9TUC4</accession>
<proteinExistence type="evidence at transcript level"/>
<evidence type="ECO:0000250" key="1"/>
<evidence type="ECO:0000256" key="2">
    <source>
        <dbReference type="SAM" id="MobiDB-lite"/>
    </source>
</evidence>
<evidence type="ECO:0000305" key="3"/>
<sequence length="63" mass="8654">MARYRRHSRSRSRSRYRRRRRRRSRHHNRRRTYRRSRRHSIRRRGRRRGYSRRRYSRRGRRRY</sequence>
<keyword id="KW-0158">Chromosome</keyword>
<keyword id="KW-0217">Developmental protein</keyword>
<keyword id="KW-0221">Differentiation</keyword>
<keyword id="KW-0226">DNA condensation</keyword>
<keyword id="KW-0238">DNA-binding</keyword>
<keyword id="KW-0544">Nucleosome core</keyword>
<keyword id="KW-0539">Nucleus</keyword>
<keyword id="KW-0744">Spermatogenesis</keyword>
<reference key="1">
    <citation type="journal article" date="1999" name="Mol. Phylogenet. Evol.">
        <title>Systematic relationships within the dasyurid marsupial tribe Sminthopsini -- a multigene approach.</title>
        <authorList>
            <person name="Blacket M.J."/>
            <person name="Krajewski C."/>
            <person name="Labrinidis A."/>
            <person name="Cambron B."/>
            <person name="Cooper S."/>
            <person name="Westerman M."/>
        </authorList>
    </citation>
    <scope>NUCLEOTIDE SEQUENCE [GENOMIC DNA]</scope>
</reference>
<dbReference type="EMBL" id="AF089873">
    <property type="protein sequence ID" value="AAD55332.1"/>
    <property type="molecule type" value="Genomic_DNA"/>
</dbReference>
<dbReference type="GO" id="GO:0000786">
    <property type="term" value="C:nucleosome"/>
    <property type="evidence" value="ECO:0007669"/>
    <property type="project" value="UniProtKB-KW"/>
</dbReference>
<dbReference type="GO" id="GO:0005634">
    <property type="term" value="C:nucleus"/>
    <property type="evidence" value="ECO:0007669"/>
    <property type="project" value="UniProtKB-SubCell"/>
</dbReference>
<dbReference type="GO" id="GO:0003677">
    <property type="term" value="F:DNA binding"/>
    <property type="evidence" value="ECO:0007669"/>
    <property type="project" value="UniProtKB-KW"/>
</dbReference>
<dbReference type="GO" id="GO:0030261">
    <property type="term" value="P:chromosome condensation"/>
    <property type="evidence" value="ECO:0007669"/>
    <property type="project" value="UniProtKB-KW"/>
</dbReference>
<dbReference type="GO" id="GO:0035092">
    <property type="term" value="P:sperm DNA condensation"/>
    <property type="evidence" value="ECO:0007669"/>
    <property type="project" value="InterPro"/>
</dbReference>
<dbReference type="InterPro" id="IPR000221">
    <property type="entry name" value="Protamine_P1"/>
</dbReference>
<dbReference type="PROSITE" id="PS00048">
    <property type="entry name" value="PROTAMINE_P1"/>
    <property type="match status" value="1"/>
</dbReference>
<comment type="function">
    <text evidence="1">Protamines substitute for histones in the chromatin of sperm during the haploid phase of spermatogenesis. They compact sperm DNA into a highly condensed, stable and inactive complex (By similarity).</text>
</comment>
<comment type="subcellular location">
    <subcellularLocation>
        <location evidence="1">Nucleus</location>
    </subcellularLocation>
    <subcellularLocation>
        <location evidence="1">Chromosome</location>
    </subcellularLocation>
</comment>
<comment type="tissue specificity">
    <text>Testis.</text>
</comment>
<comment type="similarity">
    <text evidence="3">Belongs to the protamine P1 family.</text>
</comment>
<feature type="chain" id="PRO_0000191560" description="Sperm protamine P1">
    <location>
        <begin position="1"/>
        <end position="63"/>
    </location>
</feature>
<feature type="region of interest" description="Disordered" evidence="2">
    <location>
        <begin position="1"/>
        <end position="63"/>
    </location>
</feature>
<protein>
    <recommendedName>
        <fullName>Sperm protamine P1</fullName>
    </recommendedName>
</protein>
<gene>
    <name type="primary">PRM1</name>
</gene>
<organism>
    <name type="scientific">Sminthopsis bindi</name>
    <name type="common">Kakadu dunnart</name>
    <dbReference type="NCBI Taxonomy" id="90757"/>
    <lineage>
        <taxon>Eukaryota</taxon>
        <taxon>Metazoa</taxon>
        <taxon>Chordata</taxon>
        <taxon>Craniata</taxon>
        <taxon>Vertebrata</taxon>
        <taxon>Euteleostomi</taxon>
        <taxon>Mammalia</taxon>
        <taxon>Metatheria</taxon>
        <taxon>Dasyuromorphia</taxon>
        <taxon>Dasyuridae</taxon>
        <taxon>Sminthopsis</taxon>
    </lineage>
</organism>